<accession>B1P1E4</accession>
<feature type="signal peptide" evidence="2">
    <location>
        <begin position="1"/>
        <end position="21"/>
    </location>
</feature>
<feature type="propeptide" id="PRO_0000398457" evidence="3">
    <location>
        <begin position="22"/>
        <end position="50"/>
    </location>
</feature>
<feature type="peptide" id="PRO_0000398458" description="Kappa-theraphotoxin-Cg1c">
    <location>
        <begin position="51"/>
        <end position="84"/>
    </location>
</feature>
<feature type="disulfide bond" evidence="1">
    <location>
        <begin position="52"/>
        <end position="66"/>
    </location>
</feature>
<feature type="disulfide bond" evidence="1">
    <location>
        <begin position="59"/>
        <end position="71"/>
    </location>
</feature>
<feature type="disulfide bond" evidence="1">
    <location>
        <begin position="65"/>
        <end position="78"/>
    </location>
</feature>
<sequence length="86" mass="9630">MKVSVLITLAVLGVMFVWASAAELEERGSDHRDSPAWLKSMERIFQSEERECRKMFGGCSVHSDCCAHLGCKPTLKYCAWDGTFGK</sequence>
<protein>
    <recommendedName>
        <fullName>Kappa-theraphotoxin-Cg1c</fullName>
        <shortName>Kappa-TRTX-Cg1c</shortName>
    </recommendedName>
    <alternativeName>
        <fullName>Jingzhaotoxin-29</fullName>
        <shortName>JZTX-29</shortName>
    </alternativeName>
    <alternativeName>
        <fullName>Peptide F4-13.58</fullName>
    </alternativeName>
</protein>
<comment type="function">
    <text>Probable ion channel inhibitor.</text>
</comment>
<comment type="subcellular location">
    <subcellularLocation>
        <location>Secreted</location>
    </subcellularLocation>
</comment>
<comment type="tissue specificity">
    <text>Expressed by the venom gland.</text>
</comment>
<comment type="domain">
    <text evidence="1">The presence of a 'disulfide through disulfide knot' structurally defines this protein as a knottin.</text>
</comment>
<comment type="mass spectrometry" mass="3741.1" method="MALDI" evidence="3">
    <text>Monoisotopic mass.</text>
</comment>
<comment type="similarity">
    <text evidence="4">Belongs to the neurotoxin 10 (Hwtx-1) family. 28 (Jztx-11) subfamily.</text>
</comment>
<proteinExistence type="evidence at protein level"/>
<reference key="1">
    <citation type="journal article" date="2008" name="Cell. Mol. Life Sci.">
        <title>Molecular diversity and evolution of cystine knot toxins of the tarantula Chilobrachys jingzhao.</title>
        <authorList>
            <person name="Chen J."/>
            <person name="Deng M."/>
            <person name="He Q."/>
            <person name="Meng E."/>
            <person name="Jiang L."/>
            <person name="Liao Z."/>
            <person name="Rong M."/>
            <person name="Liang S."/>
        </authorList>
    </citation>
    <scope>NUCLEOTIDE SEQUENCE [LARGE SCALE MRNA]</scope>
    <source>
        <tissue>Venom gland</tissue>
    </source>
</reference>
<reference key="2">
    <citation type="journal article" date="2007" name="Proteomics">
        <title>Proteomic and peptidomic analysis of the venom from Chinese tarantula Chilobrachys jingzhao.</title>
        <authorList>
            <person name="Liao Z."/>
            <person name="Cao J."/>
            <person name="Li S."/>
            <person name="Yan X."/>
            <person name="Hu W."/>
            <person name="He Q."/>
            <person name="Chen J."/>
            <person name="Tang J."/>
            <person name="Xie J."/>
            <person name="Liang S."/>
        </authorList>
    </citation>
    <scope>PROTEIN SEQUENCE OF 51-61</scope>
    <scope>MASS SPECTROMETRY</scope>
    <source>
        <tissue>Venom</tissue>
    </source>
</reference>
<evidence type="ECO:0000250" key="1">
    <source>
        <dbReference type="UniProtKB" id="P0C247"/>
    </source>
</evidence>
<evidence type="ECO:0000255" key="2"/>
<evidence type="ECO:0000269" key="3">
    <source>
    </source>
</evidence>
<evidence type="ECO:0000305" key="4"/>
<organism>
    <name type="scientific">Chilobrachys guangxiensis</name>
    <name type="common">Chinese earth tiger tarantula</name>
    <name type="synonym">Chilobrachys jingzhao</name>
    <dbReference type="NCBI Taxonomy" id="278060"/>
    <lineage>
        <taxon>Eukaryota</taxon>
        <taxon>Metazoa</taxon>
        <taxon>Ecdysozoa</taxon>
        <taxon>Arthropoda</taxon>
        <taxon>Chelicerata</taxon>
        <taxon>Arachnida</taxon>
        <taxon>Araneae</taxon>
        <taxon>Mygalomorphae</taxon>
        <taxon>Theraphosidae</taxon>
        <taxon>Chilobrachys</taxon>
    </lineage>
</organism>
<name>JZT29_CHIGU</name>
<dbReference type="EMBL" id="EU233875">
    <property type="protein sequence ID" value="ABY71694.1"/>
    <property type="molecule type" value="mRNA"/>
</dbReference>
<dbReference type="SMR" id="B1P1E4"/>
<dbReference type="ArachnoServer" id="AS000823">
    <property type="toxin name" value="kappa-theraphotoxin-Cg1c"/>
</dbReference>
<dbReference type="GO" id="GO:0005576">
    <property type="term" value="C:extracellular region"/>
    <property type="evidence" value="ECO:0007669"/>
    <property type="project" value="UniProtKB-SubCell"/>
</dbReference>
<dbReference type="GO" id="GO:0008200">
    <property type="term" value="F:ion channel inhibitor activity"/>
    <property type="evidence" value="ECO:0007669"/>
    <property type="project" value="InterPro"/>
</dbReference>
<dbReference type="GO" id="GO:0090729">
    <property type="term" value="F:toxin activity"/>
    <property type="evidence" value="ECO:0007669"/>
    <property type="project" value="UniProtKB-KW"/>
</dbReference>
<dbReference type="InterPro" id="IPR011696">
    <property type="entry name" value="Huwentoxin-1"/>
</dbReference>
<dbReference type="Pfam" id="PF07740">
    <property type="entry name" value="Toxin_12"/>
    <property type="match status" value="1"/>
</dbReference>
<dbReference type="SUPFAM" id="SSF57059">
    <property type="entry name" value="omega toxin-like"/>
    <property type="match status" value="1"/>
</dbReference>
<keyword id="KW-0903">Direct protein sequencing</keyword>
<keyword id="KW-1015">Disulfide bond</keyword>
<keyword id="KW-0872">Ion channel impairing toxin</keyword>
<keyword id="KW-0960">Knottin</keyword>
<keyword id="KW-0964">Secreted</keyword>
<keyword id="KW-0732">Signal</keyword>
<keyword id="KW-0800">Toxin</keyword>